<comment type="catalytic activity">
    <reaction evidence="1">
        <text>tRNA(Cys) + L-cysteine + ATP = L-cysteinyl-tRNA(Cys) + AMP + diphosphate</text>
        <dbReference type="Rhea" id="RHEA:17773"/>
        <dbReference type="Rhea" id="RHEA-COMP:9661"/>
        <dbReference type="Rhea" id="RHEA-COMP:9679"/>
        <dbReference type="ChEBI" id="CHEBI:30616"/>
        <dbReference type="ChEBI" id="CHEBI:33019"/>
        <dbReference type="ChEBI" id="CHEBI:35235"/>
        <dbReference type="ChEBI" id="CHEBI:78442"/>
        <dbReference type="ChEBI" id="CHEBI:78517"/>
        <dbReference type="ChEBI" id="CHEBI:456215"/>
        <dbReference type="EC" id="6.1.1.16"/>
    </reaction>
</comment>
<comment type="cofactor">
    <cofactor evidence="1">
        <name>Zn(2+)</name>
        <dbReference type="ChEBI" id="CHEBI:29105"/>
    </cofactor>
    <text evidence="1">Binds 1 zinc ion per subunit.</text>
</comment>
<comment type="subunit">
    <text evidence="1">Monomer.</text>
</comment>
<comment type="subcellular location">
    <subcellularLocation>
        <location evidence="1">Cytoplasm</location>
    </subcellularLocation>
</comment>
<comment type="similarity">
    <text evidence="1">Belongs to the class-I aminoacyl-tRNA synthetase family.</text>
</comment>
<proteinExistence type="inferred from homology"/>
<dbReference type="EC" id="6.1.1.16" evidence="1"/>
<dbReference type="EMBL" id="CP001336">
    <property type="protein sequence ID" value="ACL18465.1"/>
    <property type="molecule type" value="Genomic_DNA"/>
</dbReference>
<dbReference type="RefSeq" id="WP_011459084.1">
    <property type="nucleotide sequence ID" value="NC_011830.1"/>
</dbReference>
<dbReference type="SMR" id="B8G1U2"/>
<dbReference type="KEGG" id="dhd:Dhaf_0398"/>
<dbReference type="HOGENOM" id="CLU_013528_0_1_9"/>
<dbReference type="Proteomes" id="UP000007726">
    <property type="component" value="Chromosome"/>
</dbReference>
<dbReference type="GO" id="GO:0005829">
    <property type="term" value="C:cytosol"/>
    <property type="evidence" value="ECO:0007669"/>
    <property type="project" value="TreeGrafter"/>
</dbReference>
<dbReference type="GO" id="GO:0005524">
    <property type="term" value="F:ATP binding"/>
    <property type="evidence" value="ECO:0007669"/>
    <property type="project" value="UniProtKB-UniRule"/>
</dbReference>
<dbReference type="GO" id="GO:0004817">
    <property type="term" value="F:cysteine-tRNA ligase activity"/>
    <property type="evidence" value="ECO:0007669"/>
    <property type="project" value="UniProtKB-UniRule"/>
</dbReference>
<dbReference type="GO" id="GO:0008270">
    <property type="term" value="F:zinc ion binding"/>
    <property type="evidence" value="ECO:0007669"/>
    <property type="project" value="UniProtKB-UniRule"/>
</dbReference>
<dbReference type="GO" id="GO:0006423">
    <property type="term" value="P:cysteinyl-tRNA aminoacylation"/>
    <property type="evidence" value="ECO:0007669"/>
    <property type="project" value="UniProtKB-UniRule"/>
</dbReference>
<dbReference type="CDD" id="cd00672">
    <property type="entry name" value="CysRS_core"/>
    <property type="match status" value="1"/>
</dbReference>
<dbReference type="FunFam" id="3.40.50.620:FF:000009">
    <property type="entry name" value="Cysteine--tRNA ligase"/>
    <property type="match status" value="1"/>
</dbReference>
<dbReference type="Gene3D" id="1.20.120.1910">
    <property type="entry name" value="Cysteine-tRNA ligase, C-terminal anti-codon recognition domain"/>
    <property type="match status" value="1"/>
</dbReference>
<dbReference type="Gene3D" id="3.40.50.620">
    <property type="entry name" value="HUPs"/>
    <property type="match status" value="1"/>
</dbReference>
<dbReference type="HAMAP" id="MF_00041">
    <property type="entry name" value="Cys_tRNA_synth"/>
    <property type="match status" value="1"/>
</dbReference>
<dbReference type="InterPro" id="IPR015803">
    <property type="entry name" value="Cys-tRNA-ligase"/>
</dbReference>
<dbReference type="InterPro" id="IPR015273">
    <property type="entry name" value="Cys-tRNA-synt_Ia_DALR"/>
</dbReference>
<dbReference type="InterPro" id="IPR024909">
    <property type="entry name" value="Cys-tRNA/MSH_ligase"/>
</dbReference>
<dbReference type="InterPro" id="IPR056411">
    <property type="entry name" value="CysS_C"/>
</dbReference>
<dbReference type="InterPro" id="IPR014729">
    <property type="entry name" value="Rossmann-like_a/b/a_fold"/>
</dbReference>
<dbReference type="InterPro" id="IPR032678">
    <property type="entry name" value="tRNA-synt_1_cat_dom"/>
</dbReference>
<dbReference type="InterPro" id="IPR009080">
    <property type="entry name" value="tRNAsynth_Ia_anticodon-bd"/>
</dbReference>
<dbReference type="NCBIfam" id="TIGR00435">
    <property type="entry name" value="cysS"/>
    <property type="match status" value="1"/>
</dbReference>
<dbReference type="PANTHER" id="PTHR10890:SF3">
    <property type="entry name" value="CYSTEINE--TRNA LIGASE, CYTOPLASMIC"/>
    <property type="match status" value="1"/>
</dbReference>
<dbReference type="PANTHER" id="PTHR10890">
    <property type="entry name" value="CYSTEINYL-TRNA SYNTHETASE"/>
    <property type="match status" value="1"/>
</dbReference>
<dbReference type="Pfam" id="PF23493">
    <property type="entry name" value="CysS_C"/>
    <property type="match status" value="1"/>
</dbReference>
<dbReference type="Pfam" id="PF09190">
    <property type="entry name" value="DALR_2"/>
    <property type="match status" value="1"/>
</dbReference>
<dbReference type="Pfam" id="PF01406">
    <property type="entry name" value="tRNA-synt_1e"/>
    <property type="match status" value="1"/>
</dbReference>
<dbReference type="PRINTS" id="PR00983">
    <property type="entry name" value="TRNASYNTHCYS"/>
</dbReference>
<dbReference type="SMART" id="SM00840">
    <property type="entry name" value="DALR_2"/>
    <property type="match status" value="1"/>
</dbReference>
<dbReference type="SUPFAM" id="SSF47323">
    <property type="entry name" value="Anticodon-binding domain of a subclass of class I aminoacyl-tRNA synthetases"/>
    <property type="match status" value="1"/>
</dbReference>
<dbReference type="SUPFAM" id="SSF52374">
    <property type="entry name" value="Nucleotidylyl transferase"/>
    <property type="match status" value="1"/>
</dbReference>
<protein>
    <recommendedName>
        <fullName evidence="1">Cysteine--tRNA ligase</fullName>
        <ecNumber evidence="1">6.1.1.16</ecNumber>
    </recommendedName>
    <alternativeName>
        <fullName evidence="1">Cysteinyl-tRNA synthetase</fullName>
        <shortName evidence="1">CysRS</shortName>
    </alternativeName>
</protein>
<reference key="1">
    <citation type="journal article" date="2012" name="BMC Microbiol.">
        <title>Genome sequence of Desulfitobacterium hafniense DCB-2, a Gram-positive anaerobe capable of dehalogenation and metal reduction.</title>
        <authorList>
            <person name="Kim S.H."/>
            <person name="Harzman C."/>
            <person name="Davis J.K."/>
            <person name="Hutcheson R."/>
            <person name="Broderick J.B."/>
            <person name="Marsh T.L."/>
            <person name="Tiedje J.M."/>
        </authorList>
    </citation>
    <scope>NUCLEOTIDE SEQUENCE [LARGE SCALE GENOMIC DNA]</scope>
    <source>
        <strain>DSM 10664 / DCB-2</strain>
    </source>
</reference>
<evidence type="ECO:0000255" key="1">
    <source>
        <dbReference type="HAMAP-Rule" id="MF_00041"/>
    </source>
</evidence>
<gene>
    <name evidence="1" type="primary">cysS</name>
    <name type="ordered locus">Dhaf_0398</name>
</gene>
<organism>
    <name type="scientific">Desulfitobacterium hafniense (strain DSM 10664 / DCB-2)</name>
    <dbReference type="NCBI Taxonomy" id="272564"/>
    <lineage>
        <taxon>Bacteria</taxon>
        <taxon>Bacillati</taxon>
        <taxon>Bacillota</taxon>
        <taxon>Clostridia</taxon>
        <taxon>Eubacteriales</taxon>
        <taxon>Desulfitobacteriaceae</taxon>
        <taxon>Desulfitobacterium</taxon>
    </lineage>
</organism>
<sequence>MALRLFNTMSHQKEEFKPREEGKVGMYTCGPTVYNYFHVGNGRMLVVFDMIRRYLLYKGYDVTFVQNFTDIDDKIIKRGQEEGRDPLELAQDYIGEYFKDAAALNLMPASIHPKATDHIPEMIEIIKGLEEQGLAYAVDGDVYFAVDKLPAYGKLSGRTLEDMQAGARVEVGERKQNPMDFALWKNAKPGEPFWESPWGKGRPGWHIECSAMSLKYLGSGFDIHGGGGDLVFPHHENEIAQAEGYLHGETFARYWMHNAFLTINQQKMSKSLGNFFTVREILEHFPGEVIRFYLLGTHYRSPLDFDDENLQMAQKGLERLQTSIRLADEALGRQGQNSADAASGQKLRAAAEEARREFAEAMDDDFNSALAYASLFELGKAINAHVQAYPYSSEGLLKARATLWELADVLGFDLAKPANQAEAGNQKLDQVMELLLEVRAIARKKKDWEMSDLIRDRLKDLGIVLEDTPQGARWTLK</sequence>
<accession>B8G1U2</accession>
<feature type="chain" id="PRO_1000199056" description="Cysteine--tRNA ligase">
    <location>
        <begin position="1"/>
        <end position="477"/>
    </location>
</feature>
<feature type="short sequence motif" description="'HIGH' region">
    <location>
        <begin position="31"/>
        <end position="41"/>
    </location>
</feature>
<feature type="short sequence motif" description="'KMSKS' region">
    <location>
        <begin position="267"/>
        <end position="271"/>
    </location>
</feature>
<feature type="binding site" evidence="1">
    <location>
        <position position="29"/>
    </location>
    <ligand>
        <name>Zn(2+)</name>
        <dbReference type="ChEBI" id="CHEBI:29105"/>
    </ligand>
</feature>
<feature type="binding site" evidence="1">
    <location>
        <position position="209"/>
    </location>
    <ligand>
        <name>Zn(2+)</name>
        <dbReference type="ChEBI" id="CHEBI:29105"/>
    </ligand>
</feature>
<feature type="binding site" evidence="1">
    <location>
        <position position="234"/>
    </location>
    <ligand>
        <name>Zn(2+)</name>
        <dbReference type="ChEBI" id="CHEBI:29105"/>
    </ligand>
</feature>
<feature type="binding site" evidence="1">
    <location>
        <position position="238"/>
    </location>
    <ligand>
        <name>Zn(2+)</name>
        <dbReference type="ChEBI" id="CHEBI:29105"/>
    </ligand>
</feature>
<feature type="binding site" evidence="1">
    <location>
        <position position="270"/>
    </location>
    <ligand>
        <name>ATP</name>
        <dbReference type="ChEBI" id="CHEBI:30616"/>
    </ligand>
</feature>
<name>SYC_DESHD</name>
<keyword id="KW-0030">Aminoacyl-tRNA synthetase</keyword>
<keyword id="KW-0067">ATP-binding</keyword>
<keyword id="KW-0963">Cytoplasm</keyword>
<keyword id="KW-0436">Ligase</keyword>
<keyword id="KW-0479">Metal-binding</keyword>
<keyword id="KW-0547">Nucleotide-binding</keyword>
<keyword id="KW-0648">Protein biosynthesis</keyword>
<keyword id="KW-0862">Zinc</keyword>